<sequence>MNPNFLDFEQPIADLQAKIEELRLVGNDNSLNIGDEISRLQDKSKTLTEDIFGKLTSWQIARLARHPKRPYTLDYIEHIFTEFDELHGDRHFSDDAAIVGGVARLEDQPVMVIGHQKGREVREKVRRNFGMPRPEGYRKACRLMEMAERFKMPILTFIDTPGAYPGIDAEERNQSEAIAWNLRVMARLKTPIIATVIGEGGSGGALAIGVCDQLNMLQYSTYAVISPEGCASILWKTAEKAPDAAEAMGITAERLKGLGIVDKVISEPLGGAHRDPAAAAASIRAELSSQLAMLKKFDNEALLKRRYDRLMSYGL</sequence>
<gene>
    <name evidence="1" type="primary">accA</name>
    <name type="ordered locus">Pfl01_1117</name>
</gene>
<name>ACCA_PSEPF</name>
<organism>
    <name type="scientific">Pseudomonas fluorescens (strain Pf0-1)</name>
    <dbReference type="NCBI Taxonomy" id="205922"/>
    <lineage>
        <taxon>Bacteria</taxon>
        <taxon>Pseudomonadati</taxon>
        <taxon>Pseudomonadota</taxon>
        <taxon>Gammaproteobacteria</taxon>
        <taxon>Pseudomonadales</taxon>
        <taxon>Pseudomonadaceae</taxon>
        <taxon>Pseudomonas</taxon>
    </lineage>
</organism>
<reference key="1">
    <citation type="journal article" date="2009" name="Genome Biol.">
        <title>Genomic and genetic analyses of diversity and plant interactions of Pseudomonas fluorescens.</title>
        <authorList>
            <person name="Silby M.W."/>
            <person name="Cerdeno-Tarraga A.M."/>
            <person name="Vernikos G.S."/>
            <person name="Giddens S.R."/>
            <person name="Jackson R.W."/>
            <person name="Preston G.M."/>
            <person name="Zhang X.-X."/>
            <person name="Moon C.D."/>
            <person name="Gehrig S.M."/>
            <person name="Godfrey S.A.C."/>
            <person name="Knight C.G."/>
            <person name="Malone J.G."/>
            <person name="Robinson Z."/>
            <person name="Spiers A.J."/>
            <person name="Harris S."/>
            <person name="Challis G.L."/>
            <person name="Yaxley A.M."/>
            <person name="Harris D."/>
            <person name="Seeger K."/>
            <person name="Murphy L."/>
            <person name="Rutter S."/>
            <person name="Squares R."/>
            <person name="Quail M.A."/>
            <person name="Saunders E."/>
            <person name="Mavromatis K."/>
            <person name="Brettin T.S."/>
            <person name="Bentley S.D."/>
            <person name="Hothersall J."/>
            <person name="Stephens E."/>
            <person name="Thomas C.M."/>
            <person name="Parkhill J."/>
            <person name="Levy S.B."/>
            <person name="Rainey P.B."/>
            <person name="Thomson N.R."/>
        </authorList>
    </citation>
    <scope>NUCLEOTIDE SEQUENCE [LARGE SCALE GENOMIC DNA]</scope>
    <source>
        <strain>Pf0-1</strain>
    </source>
</reference>
<feature type="chain" id="PRO_1000062658" description="Acetyl-coenzyme A carboxylase carboxyl transferase subunit alpha">
    <location>
        <begin position="1"/>
        <end position="315"/>
    </location>
</feature>
<feature type="domain" description="CoA carboxyltransferase C-terminal" evidence="2">
    <location>
        <begin position="40"/>
        <end position="293"/>
    </location>
</feature>
<comment type="function">
    <text evidence="1">Component of the acetyl coenzyme A carboxylase (ACC) complex. First, biotin carboxylase catalyzes the carboxylation of biotin on its carrier protein (BCCP) and then the CO(2) group is transferred by the carboxyltransferase to acetyl-CoA to form malonyl-CoA.</text>
</comment>
<comment type="catalytic activity">
    <reaction evidence="1">
        <text>N(6)-carboxybiotinyl-L-lysyl-[protein] + acetyl-CoA = N(6)-biotinyl-L-lysyl-[protein] + malonyl-CoA</text>
        <dbReference type="Rhea" id="RHEA:54728"/>
        <dbReference type="Rhea" id="RHEA-COMP:10505"/>
        <dbReference type="Rhea" id="RHEA-COMP:10506"/>
        <dbReference type="ChEBI" id="CHEBI:57288"/>
        <dbReference type="ChEBI" id="CHEBI:57384"/>
        <dbReference type="ChEBI" id="CHEBI:83144"/>
        <dbReference type="ChEBI" id="CHEBI:83145"/>
        <dbReference type="EC" id="2.1.3.15"/>
    </reaction>
</comment>
<comment type="pathway">
    <text evidence="1">Lipid metabolism; malonyl-CoA biosynthesis; malonyl-CoA from acetyl-CoA: step 1/1.</text>
</comment>
<comment type="subunit">
    <text evidence="1">Acetyl-CoA carboxylase is a heterohexamer composed of biotin carboxyl carrier protein (AccB), biotin carboxylase (AccC) and two subunits each of ACCase subunit alpha (AccA) and ACCase subunit beta (AccD).</text>
</comment>
<comment type="subcellular location">
    <subcellularLocation>
        <location evidence="1">Cytoplasm</location>
    </subcellularLocation>
</comment>
<comment type="similarity">
    <text evidence="1">Belongs to the AccA family.</text>
</comment>
<dbReference type="EC" id="2.1.3.15" evidence="1"/>
<dbReference type="EMBL" id="CP000094">
    <property type="protein sequence ID" value="ABA72860.1"/>
    <property type="molecule type" value="Genomic_DNA"/>
</dbReference>
<dbReference type="RefSeq" id="WP_011332694.1">
    <property type="nucleotide sequence ID" value="NC_007492.2"/>
</dbReference>
<dbReference type="SMR" id="Q3KH96"/>
<dbReference type="KEGG" id="pfo:Pfl01_1117"/>
<dbReference type="eggNOG" id="COG0825">
    <property type="taxonomic scope" value="Bacteria"/>
</dbReference>
<dbReference type="HOGENOM" id="CLU_015486_0_2_6"/>
<dbReference type="UniPathway" id="UPA00655">
    <property type="reaction ID" value="UER00711"/>
</dbReference>
<dbReference type="Proteomes" id="UP000002704">
    <property type="component" value="Chromosome"/>
</dbReference>
<dbReference type="GO" id="GO:0009317">
    <property type="term" value="C:acetyl-CoA carboxylase complex"/>
    <property type="evidence" value="ECO:0007669"/>
    <property type="project" value="InterPro"/>
</dbReference>
<dbReference type="GO" id="GO:0003989">
    <property type="term" value="F:acetyl-CoA carboxylase activity"/>
    <property type="evidence" value="ECO:0007669"/>
    <property type="project" value="InterPro"/>
</dbReference>
<dbReference type="GO" id="GO:0005524">
    <property type="term" value="F:ATP binding"/>
    <property type="evidence" value="ECO:0007669"/>
    <property type="project" value="UniProtKB-KW"/>
</dbReference>
<dbReference type="GO" id="GO:0016743">
    <property type="term" value="F:carboxyl- or carbamoyltransferase activity"/>
    <property type="evidence" value="ECO:0007669"/>
    <property type="project" value="UniProtKB-UniRule"/>
</dbReference>
<dbReference type="GO" id="GO:0006633">
    <property type="term" value="P:fatty acid biosynthetic process"/>
    <property type="evidence" value="ECO:0007669"/>
    <property type="project" value="UniProtKB-KW"/>
</dbReference>
<dbReference type="GO" id="GO:2001295">
    <property type="term" value="P:malonyl-CoA biosynthetic process"/>
    <property type="evidence" value="ECO:0007669"/>
    <property type="project" value="UniProtKB-UniRule"/>
</dbReference>
<dbReference type="FunFam" id="3.90.226.10:FF:000008">
    <property type="entry name" value="Acetyl-coenzyme A carboxylase carboxyl transferase subunit alpha"/>
    <property type="match status" value="1"/>
</dbReference>
<dbReference type="Gene3D" id="3.90.226.10">
    <property type="entry name" value="2-enoyl-CoA Hydratase, Chain A, domain 1"/>
    <property type="match status" value="1"/>
</dbReference>
<dbReference type="HAMAP" id="MF_00823">
    <property type="entry name" value="AcetylCoA_CT_alpha"/>
    <property type="match status" value="1"/>
</dbReference>
<dbReference type="InterPro" id="IPR001095">
    <property type="entry name" value="Acetyl_CoA_COase_a_su"/>
</dbReference>
<dbReference type="InterPro" id="IPR029045">
    <property type="entry name" value="ClpP/crotonase-like_dom_sf"/>
</dbReference>
<dbReference type="InterPro" id="IPR011763">
    <property type="entry name" value="COA_CT_C"/>
</dbReference>
<dbReference type="NCBIfam" id="TIGR00513">
    <property type="entry name" value="accA"/>
    <property type="match status" value="1"/>
</dbReference>
<dbReference type="NCBIfam" id="NF041504">
    <property type="entry name" value="AccA_sub"/>
    <property type="match status" value="1"/>
</dbReference>
<dbReference type="NCBIfam" id="NF004344">
    <property type="entry name" value="PRK05724.1"/>
    <property type="match status" value="1"/>
</dbReference>
<dbReference type="PANTHER" id="PTHR42853">
    <property type="entry name" value="ACETYL-COENZYME A CARBOXYLASE CARBOXYL TRANSFERASE SUBUNIT ALPHA"/>
    <property type="match status" value="1"/>
</dbReference>
<dbReference type="PANTHER" id="PTHR42853:SF3">
    <property type="entry name" value="ACETYL-COENZYME A CARBOXYLASE CARBOXYL TRANSFERASE SUBUNIT ALPHA, CHLOROPLASTIC"/>
    <property type="match status" value="1"/>
</dbReference>
<dbReference type="Pfam" id="PF03255">
    <property type="entry name" value="ACCA"/>
    <property type="match status" value="1"/>
</dbReference>
<dbReference type="PRINTS" id="PR01069">
    <property type="entry name" value="ACCCTRFRASEA"/>
</dbReference>
<dbReference type="SUPFAM" id="SSF52096">
    <property type="entry name" value="ClpP/crotonase"/>
    <property type="match status" value="1"/>
</dbReference>
<dbReference type="PROSITE" id="PS50989">
    <property type="entry name" value="COA_CT_CTER"/>
    <property type="match status" value="1"/>
</dbReference>
<keyword id="KW-0067">ATP-binding</keyword>
<keyword id="KW-0963">Cytoplasm</keyword>
<keyword id="KW-0275">Fatty acid biosynthesis</keyword>
<keyword id="KW-0276">Fatty acid metabolism</keyword>
<keyword id="KW-0444">Lipid biosynthesis</keyword>
<keyword id="KW-0443">Lipid metabolism</keyword>
<keyword id="KW-0547">Nucleotide-binding</keyword>
<keyword id="KW-0808">Transferase</keyword>
<accession>Q3KH96</accession>
<evidence type="ECO:0000255" key="1">
    <source>
        <dbReference type="HAMAP-Rule" id="MF_00823"/>
    </source>
</evidence>
<evidence type="ECO:0000255" key="2">
    <source>
        <dbReference type="PROSITE-ProRule" id="PRU01137"/>
    </source>
</evidence>
<protein>
    <recommendedName>
        <fullName evidence="1">Acetyl-coenzyme A carboxylase carboxyl transferase subunit alpha</fullName>
        <shortName evidence="1">ACCase subunit alpha</shortName>
        <shortName evidence="1">Acetyl-CoA carboxylase carboxyltransferase subunit alpha</shortName>
        <ecNumber evidence="1">2.1.3.15</ecNumber>
    </recommendedName>
</protein>
<proteinExistence type="inferred from homology"/>